<keyword id="KW-0489">Methyltransferase</keyword>
<keyword id="KW-1185">Reference proteome</keyword>
<keyword id="KW-0949">S-adenosyl-L-methionine</keyword>
<keyword id="KW-0808">Transferase</keyword>
<keyword id="KW-0831">Ubiquinone biosynthesis</keyword>
<feature type="chain" id="PRO_0000241741" description="Ubiquinone biosynthesis O-methyltransferase">
    <location>
        <begin position="1"/>
        <end position="232"/>
    </location>
</feature>
<feature type="binding site" evidence="1">
    <location>
        <position position="36"/>
    </location>
    <ligand>
        <name>S-adenosyl-L-methionine</name>
        <dbReference type="ChEBI" id="CHEBI:59789"/>
    </ligand>
</feature>
<feature type="binding site" evidence="1">
    <location>
        <position position="55"/>
    </location>
    <ligand>
        <name>S-adenosyl-L-methionine</name>
        <dbReference type="ChEBI" id="CHEBI:59789"/>
    </ligand>
</feature>
<feature type="binding site" evidence="1">
    <location>
        <position position="76"/>
    </location>
    <ligand>
        <name>S-adenosyl-L-methionine</name>
        <dbReference type="ChEBI" id="CHEBI:59789"/>
    </ligand>
</feature>
<feature type="binding site" evidence="1">
    <location>
        <position position="120"/>
    </location>
    <ligand>
        <name>S-adenosyl-L-methionine</name>
        <dbReference type="ChEBI" id="CHEBI:59789"/>
    </ligand>
</feature>
<dbReference type="EC" id="2.1.1.222" evidence="1"/>
<dbReference type="EC" id="2.1.1.64" evidence="1"/>
<dbReference type="EMBL" id="CP000116">
    <property type="protein sequence ID" value="AAZ96899.1"/>
    <property type="molecule type" value="Genomic_DNA"/>
</dbReference>
<dbReference type="RefSeq" id="WP_011311458.1">
    <property type="nucleotide sequence ID" value="NC_007404.1"/>
</dbReference>
<dbReference type="SMR" id="Q3SK91"/>
<dbReference type="STRING" id="292415.Tbd_0946"/>
<dbReference type="KEGG" id="tbd:Tbd_0946"/>
<dbReference type="eggNOG" id="COG2227">
    <property type="taxonomic scope" value="Bacteria"/>
</dbReference>
<dbReference type="HOGENOM" id="CLU_042432_5_0_4"/>
<dbReference type="OrthoDB" id="9801538at2"/>
<dbReference type="UniPathway" id="UPA00232"/>
<dbReference type="Proteomes" id="UP000008291">
    <property type="component" value="Chromosome"/>
</dbReference>
<dbReference type="GO" id="GO:0102208">
    <property type="term" value="F:2-polyprenyl-6-hydroxyphenol methylase activity"/>
    <property type="evidence" value="ECO:0007669"/>
    <property type="project" value="UniProtKB-EC"/>
</dbReference>
<dbReference type="GO" id="GO:0061542">
    <property type="term" value="F:3-demethylubiquinol 3-O-methyltransferase activity"/>
    <property type="evidence" value="ECO:0007669"/>
    <property type="project" value="UniProtKB-UniRule"/>
</dbReference>
<dbReference type="GO" id="GO:0010420">
    <property type="term" value="F:polyprenyldihydroxybenzoate methyltransferase activity"/>
    <property type="evidence" value="ECO:0007669"/>
    <property type="project" value="InterPro"/>
</dbReference>
<dbReference type="GO" id="GO:0032259">
    <property type="term" value="P:methylation"/>
    <property type="evidence" value="ECO:0007669"/>
    <property type="project" value="UniProtKB-KW"/>
</dbReference>
<dbReference type="CDD" id="cd02440">
    <property type="entry name" value="AdoMet_MTases"/>
    <property type="match status" value="1"/>
</dbReference>
<dbReference type="FunFam" id="3.40.50.150:FF:000028">
    <property type="entry name" value="Ubiquinone biosynthesis O-methyltransferase"/>
    <property type="match status" value="1"/>
</dbReference>
<dbReference type="Gene3D" id="3.40.50.150">
    <property type="entry name" value="Vaccinia Virus protein VP39"/>
    <property type="match status" value="1"/>
</dbReference>
<dbReference type="HAMAP" id="MF_00472">
    <property type="entry name" value="UbiG"/>
    <property type="match status" value="1"/>
</dbReference>
<dbReference type="InterPro" id="IPR029063">
    <property type="entry name" value="SAM-dependent_MTases_sf"/>
</dbReference>
<dbReference type="InterPro" id="IPR010233">
    <property type="entry name" value="UbiG_MeTrfase"/>
</dbReference>
<dbReference type="NCBIfam" id="TIGR01983">
    <property type="entry name" value="UbiG"/>
    <property type="match status" value="1"/>
</dbReference>
<dbReference type="PANTHER" id="PTHR43464">
    <property type="entry name" value="METHYLTRANSFERASE"/>
    <property type="match status" value="1"/>
</dbReference>
<dbReference type="PANTHER" id="PTHR43464:SF19">
    <property type="entry name" value="UBIQUINONE BIOSYNTHESIS O-METHYLTRANSFERASE, MITOCHONDRIAL"/>
    <property type="match status" value="1"/>
</dbReference>
<dbReference type="Pfam" id="PF13489">
    <property type="entry name" value="Methyltransf_23"/>
    <property type="match status" value="1"/>
</dbReference>
<dbReference type="SUPFAM" id="SSF53335">
    <property type="entry name" value="S-adenosyl-L-methionine-dependent methyltransferases"/>
    <property type="match status" value="1"/>
</dbReference>
<name>UBIG_THIDA</name>
<organism>
    <name type="scientific">Thiobacillus denitrificans (strain ATCC 25259 / T1)</name>
    <dbReference type="NCBI Taxonomy" id="292415"/>
    <lineage>
        <taxon>Bacteria</taxon>
        <taxon>Pseudomonadati</taxon>
        <taxon>Pseudomonadota</taxon>
        <taxon>Betaproteobacteria</taxon>
        <taxon>Nitrosomonadales</taxon>
        <taxon>Thiobacillaceae</taxon>
        <taxon>Thiobacillus</taxon>
    </lineage>
</organism>
<accession>Q3SK91</accession>
<protein>
    <recommendedName>
        <fullName evidence="1">Ubiquinone biosynthesis O-methyltransferase</fullName>
    </recommendedName>
    <alternativeName>
        <fullName evidence="1">2-polyprenyl-6-hydroxyphenol methylase</fullName>
        <ecNumber evidence="1">2.1.1.222</ecNumber>
    </alternativeName>
    <alternativeName>
        <fullName evidence="1">3-demethylubiquinone 3-O-methyltransferase</fullName>
        <ecNumber evidence="1">2.1.1.64</ecNumber>
    </alternativeName>
</protein>
<comment type="function">
    <text evidence="1">O-methyltransferase that catalyzes the 2 O-methylation steps in the ubiquinone biosynthetic pathway.</text>
</comment>
<comment type="catalytic activity">
    <reaction evidence="1">
        <text>a 3-demethylubiquinol + S-adenosyl-L-methionine = a ubiquinol + S-adenosyl-L-homocysteine + H(+)</text>
        <dbReference type="Rhea" id="RHEA:44380"/>
        <dbReference type="Rhea" id="RHEA-COMP:9566"/>
        <dbReference type="Rhea" id="RHEA-COMP:10914"/>
        <dbReference type="ChEBI" id="CHEBI:15378"/>
        <dbReference type="ChEBI" id="CHEBI:17976"/>
        <dbReference type="ChEBI" id="CHEBI:57856"/>
        <dbReference type="ChEBI" id="CHEBI:59789"/>
        <dbReference type="ChEBI" id="CHEBI:84422"/>
        <dbReference type="EC" id="2.1.1.64"/>
    </reaction>
</comment>
<comment type="catalytic activity">
    <reaction evidence="1">
        <text>a 3-(all-trans-polyprenyl)benzene-1,2-diol + S-adenosyl-L-methionine = a 2-methoxy-6-(all-trans-polyprenyl)phenol + S-adenosyl-L-homocysteine + H(+)</text>
        <dbReference type="Rhea" id="RHEA:31411"/>
        <dbReference type="Rhea" id="RHEA-COMP:9550"/>
        <dbReference type="Rhea" id="RHEA-COMP:9551"/>
        <dbReference type="ChEBI" id="CHEBI:15378"/>
        <dbReference type="ChEBI" id="CHEBI:57856"/>
        <dbReference type="ChEBI" id="CHEBI:59789"/>
        <dbReference type="ChEBI" id="CHEBI:62729"/>
        <dbReference type="ChEBI" id="CHEBI:62731"/>
        <dbReference type="EC" id="2.1.1.222"/>
    </reaction>
</comment>
<comment type="pathway">
    <text evidence="1">Cofactor biosynthesis; ubiquinone biosynthesis.</text>
</comment>
<comment type="similarity">
    <text evidence="1">Belongs to the methyltransferase superfamily. UbiG/COQ3 family.</text>
</comment>
<sequence>MSNVDAAEIAKFSELAHRWWDPNSEFKPLHEINPLRLRWVDTRAPLAGKKVLDVGCGGGILAEAMAGVGATVSGIDLSEKALKVARLHLYESGKSVDYELVSAEDYAAAHPGEFDVVTCMEMLEHVPDPASVVAACARLVKPGGWVFFSTLNRNAKSYLLAVVGAEYILKLLPRGTHDYAKFIKPAELARMAREAGLETEELTGMTYNPLTKVYRLEADTDVNYLMATRREA</sequence>
<proteinExistence type="inferred from homology"/>
<reference key="1">
    <citation type="journal article" date="2006" name="J. Bacteriol.">
        <title>The genome sequence of the obligately chemolithoautotrophic, facultatively anaerobic bacterium Thiobacillus denitrificans.</title>
        <authorList>
            <person name="Beller H.R."/>
            <person name="Chain P.S."/>
            <person name="Letain T.E."/>
            <person name="Chakicherla A."/>
            <person name="Larimer F.W."/>
            <person name="Richardson P.M."/>
            <person name="Coleman M.A."/>
            <person name="Wood A.P."/>
            <person name="Kelly D.P."/>
        </authorList>
    </citation>
    <scope>NUCLEOTIDE SEQUENCE [LARGE SCALE GENOMIC DNA]</scope>
    <source>
        <strain>ATCC 25259 / T1</strain>
    </source>
</reference>
<evidence type="ECO:0000255" key="1">
    <source>
        <dbReference type="HAMAP-Rule" id="MF_00472"/>
    </source>
</evidence>
<gene>
    <name evidence="1" type="primary">ubiG</name>
    <name type="ordered locus">Tbd_0946</name>
</gene>